<gene>
    <name evidence="1" type="primary">leuS</name>
    <name type="ordered locus">Gmet_2300</name>
</gene>
<evidence type="ECO:0000255" key="1">
    <source>
        <dbReference type="HAMAP-Rule" id="MF_00049"/>
    </source>
</evidence>
<organism>
    <name type="scientific">Geobacter metallireducens (strain ATCC 53774 / DSM 7210 / GS-15)</name>
    <dbReference type="NCBI Taxonomy" id="269799"/>
    <lineage>
        <taxon>Bacteria</taxon>
        <taxon>Pseudomonadati</taxon>
        <taxon>Thermodesulfobacteriota</taxon>
        <taxon>Desulfuromonadia</taxon>
        <taxon>Geobacterales</taxon>
        <taxon>Geobacteraceae</taxon>
        <taxon>Geobacter</taxon>
    </lineage>
</organism>
<accession>Q39T99</accession>
<comment type="catalytic activity">
    <reaction evidence="1">
        <text>tRNA(Leu) + L-leucine + ATP = L-leucyl-tRNA(Leu) + AMP + diphosphate</text>
        <dbReference type="Rhea" id="RHEA:11688"/>
        <dbReference type="Rhea" id="RHEA-COMP:9613"/>
        <dbReference type="Rhea" id="RHEA-COMP:9622"/>
        <dbReference type="ChEBI" id="CHEBI:30616"/>
        <dbReference type="ChEBI" id="CHEBI:33019"/>
        <dbReference type="ChEBI" id="CHEBI:57427"/>
        <dbReference type="ChEBI" id="CHEBI:78442"/>
        <dbReference type="ChEBI" id="CHEBI:78494"/>
        <dbReference type="ChEBI" id="CHEBI:456215"/>
        <dbReference type="EC" id="6.1.1.4"/>
    </reaction>
</comment>
<comment type="subcellular location">
    <subcellularLocation>
        <location evidence="1">Cytoplasm</location>
    </subcellularLocation>
</comment>
<comment type="similarity">
    <text evidence="1">Belongs to the class-I aminoacyl-tRNA synthetase family.</text>
</comment>
<reference key="1">
    <citation type="journal article" date="2009" name="BMC Microbiol.">
        <title>The genome sequence of Geobacter metallireducens: features of metabolism, physiology and regulation common and dissimilar to Geobacter sulfurreducens.</title>
        <authorList>
            <person name="Aklujkar M."/>
            <person name="Krushkal J."/>
            <person name="DiBartolo G."/>
            <person name="Lapidus A."/>
            <person name="Land M.L."/>
            <person name="Lovley D.R."/>
        </authorList>
    </citation>
    <scope>NUCLEOTIDE SEQUENCE [LARGE SCALE GENOMIC DNA]</scope>
    <source>
        <strain>ATCC 53774 / DSM 7210 / GS-15</strain>
    </source>
</reference>
<keyword id="KW-0030">Aminoacyl-tRNA synthetase</keyword>
<keyword id="KW-0067">ATP-binding</keyword>
<keyword id="KW-0963">Cytoplasm</keyword>
<keyword id="KW-0436">Ligase</keyword>
<keyword id="KW-0547">Nucleotide-binding</keyword>
<keyword id="KW-0648">Protein biosynthesis</keyword>
<keyword id="KW-1185">Reference proteome</keyword>
<name>SYL_GEOMG</name>
<sequence>MEEKYIPRNVEEKWQKIWEENKTYKVTEDPSKPKYYLLEMFPYPSGRIHMGHVRNYSIGDVVGRFKRLRGFNVLHPMGWDAFGMPAENAAIQHKSHPAKWTYENIAYMRSQLKKMGLSYDWDRELATCDLDYYKWEQKVFLEMYEKGLAYKKTSYVNWCPKCETVLANEQVEDGACWRCDSEVTQKELEQWFFRITDYAEELLEYTEKLPGWPERVLTMQRNWIGKSYGCEIDFPVEGSLAKIKVFTTRQDTLYGATFMSLAPEHPMALELTTPDRRAEVEAFIDKVKKTDKIKRTAEDFEKEGVFTGSYCINPVTNRRMPVFLANFVLLDYGTGAVMAVPTHDQRDFEFARKYDLPLQVVIQPEGETLDPAAMATAYTEVGTMVNSGTFDGLRSDEAKEKIADYLAKEGIGTKTVNFRLRDWGISRQRYWGNPIPVIYCDICGVVPVPEKDLPVVLPMDVEFTGEGGSPLKKLDSFVNVPCPQCGQMARRETDTMDTFVQSSWYFLRYCCPDFAAGPIDKARAEYWMSVDQYIGGIEHAVLHLLYARFFTKALRDLGYVTVDEPFTNLLTQGMVIKDGAKMSKSKGNVVDPDALINRYGADTARLFSLFAAPPEKDLDWSDQGVDGSYRFLSRVWRLVCDLLPFVGKGGAVDSASLSDDARGLRRAVHKTIRKVTDDIDERFHFNTAIAAIMELVNAIYAFEPKNAPENGPVLTEAIESVVIMLSPFVPHVTEELWEALGHQGGVEAAGWPSFDPSAAVDEEFLIVVQVNGKLRGKVTVATDATEEQVKAAAFADEKVKPWIEGKQLRKAIYVPGKLLNIVVG</sequence>
<feature type="chain" id="PRO_1000009346" description="Leucine--tRNA ligase">
    <location>
        <begin position="1"/>
        <end position="824"/>
    </location>
</feature>
<feature type="short sequence motif" description="'HIGH' region">
    <location>
        <begin position="42"/>
        <end position="52"/>
    </location>
</feature>
<feature type="short sequence motif" description="'KMSKS' region">
    <location>
        <begin position="581"/>
        <end position="585"/>
    </location>
</feature>
<feature type="binding site" evidence="1">
    <location>
        <position position="584"/>
    </location>
    <ligand>
        <name>ATP</name>
        <dbReference type="ChEBI" id="CHEBI:30616"/>
    </ligand>
</feature>
<protein>
    <recommendedName>
        <fullName evidence="1">Leucine--tRNA ligase</fullName>
        <ecNumber evidence="1">6.1.1.4</ecNumber>
    </recommendedName>
    <alternativeName>
        <fullName evidence="1">Leucyl-tRNA synthetase</fullName>
        <shortName evidence="1">LeuRS</shortName>
    </alternativeName>
</protein>
<dbReference type="EC" id="6.1.1.4" evidence="1"/>
<dbReference type="EMBL" id="CP000148">
    <property type="protein sequence ID" value="ABB32525.1"/>
    <property type="molecule type" value="Genomic_DNA"/>
</dbReference>
<dbReference type="RefSeq" id="WP_004514498.1">
    <property type="nucleotide sequence ID" value="NC_007517.1"/>
</dbReference>
<dbReference type="SMR" id="Q39T99"/>
<dbReference type="STRING" id="269799.Gmet_2300"/>
<dbReference type="KEGG" id="gme:Gmet_2300"/>
<dbReference type="eggNOG" id="COG0495">
    <property type="taxonomic scope" value="Bacteria"/>
</dbReference>
<dbReference type="HOGENOM" id="CLU_004427_0_0_7"/>
<dbReference type="Proteomes" id="UP000007073">
    <property type="component" value="Chromosome"/>
</dbReference>
<dbReference type="GO" id="GO:0005829">
    <property type="term" value="C:cytosol"/>
    <property type="evidence" value="ECO:0007669"/>
    <property type="project" value="TreeGrafter"/>
</dbReference>
<dbReference type="GO" id="GO:0002161">
    <property type="term" value="F:aminoacyl-tRNA deacylase activity"/>
    <property type="evidence" value="ECO:0007669"/>
    <property type="project" value="InterPro"/>
</dbReference>
<dbReference type="GO" id="GO:0005524">
    <property type="term" value="F:ATP binding"/>
    <property type="evidence" value="ECO:0007669"/>
    <property type="project" value="UniProtKB-UniRule"/>
</dbReference>
<dbReference type="GO" id="GO:0004823">
    <property type="term" value="F:leucine-tRNA ligase activity"/>
    <property type="evidence" value="ECO:0007669"/>
    <property type="project" value="UniProtKB-UniRule"/>
</dbReference>
<dbReference type="GO" id="GO:0006429">
    <property type="term" value="P:leucyl-tRNA aminoacylation"/>
    <property type="evidence" value="ECO:0007669"/>
    <property type="project" value="UniProtKB-UniRule"/>
</dbReference>
<dbReference type="CDD" id="cd07958">
    <property type="entry name" value="Anticodon_Ia_Leu_BEm"/>
    <property type="match status" value="1"/>
</dbReference>
<dbReference type="CDD" id="cd00812">
    <property type="entry name" value="LeuRS_core"/>
    <property type="match status" value="1"/>
</dbReference>
<dbReference type="FunFam" id="3.10.20.590:FF:000001">
    <property type="entry name" value="Leucine--tRNA ligase"/>
    <property type="match status" value="1"/>
</dbReference>
<dbReference type="FunFam" id="3.40.50.620:FF:000003">
    <property type="entry name" value="Leucine--tRNA ligase"/>
    <property type="match status" value="1"/>
</dbReference>
<dbReference type="FunFam" id="3.40.50.620:FF:000212">
    <property type="entry name" value="Leucine--tRNA ligase"/>
    <property type="match status" value="1"/>
</dbReference>
<dbReference type="FunFam" id="1.10.730.10:FF:000011">
    <property type="entry name" value="Leucine--tRNA ligase chloroplastic/mitochondrial"/>
    <property type="match status" value="1"/>
</dbReference>
<dbReference type="Gene3D" id="3.10.20.590">
    <property type="match status" value="1"/>
</dbReference>
<dbReference type="Gene3D" id="3.40.50.620">
    <property type="entry name" value="HUPs"/>
    <property type="match status" value="2"/>
</dbReference>
<dbReference type="Gene3D" id="1.10.730.10">
    <property type="entry name" value="Isoleucyl-tRNA Synthetase, Domain 1"/>
    <property type="match status" value="1"/>
</dbReference>
<dbReference type="HAMAP" id="MF_00049_B">
    <property type="entry name" value="Leu_tRNA_synth_B"/>
    <property type="match status" value="1"/>
</dbReference>
<dbReference type="InterPro" id="IPR001412">
    <property type="entry name" value="aa-tRNA-synth_I_CS"/>
</dbReference>
<dbReference type="InterPro" id="IPR002300">
    <property type="entry name" value="aa-tRNA-synth_Ia"/>
</dbReference>
<dbReference type="InterPro" id="IPR002302">
    <property type="entry name" value="Leu-tRNA-ligase"/>
</dbReference>
<dbReference type="InterPro" id="IPR025709">
    <property type="entry name" value="Leu_tRNA-synth_edit"/>
</dbReference>
<dbReference type="InterPro" id="IPR013155">
    <property type="entry name" value="M/V/L/I-tRNA-synth_anticd-bd"/>
</dbReference>
<dbReference type="InterPro" id="IPR015413">
    <property type="entry name" value="Methionyl/Leucyl_tRNA_Synth"/>
</dbReference>
<dbReference type="InterPro" id="IPR014729">
    <property type="entry name" value="Rossmann-like_a/b/a_fold"/>
</dbReference>
<dbReference type="InterPro" id="IPR009080">
    <property type="entry name" value="tRNAsynth_Ia_anticodon-bd"/>
</dbReference>
<dbReference type="InterPro" id="IPR009008">
    <property type="entry name" value="Val/Leu/Ile-tRNA-synth_edit"/>
</dbReference>
<dbReference type="NCBIfam" id="TIGR00396">
    <property type="entry name" value="leuS_bact"/>
    <property type="match status" value="1"/>
</dbReference>
<dbReference type="PANTHER" id="PTHR43740:SF2">
    <property type="entry name" value="LEUCINE--TRNA LIGASE, MITOCHONDRIAL"/>
    <property type="match status" value="1"/>
</dbReference>
<dbReference type="PANTHER" id="PTHR43740">
    <property type="entry name" value="LEUCYL-TRNA SYNTHETASE"/>
    <property type="match status" value="1"/>
</dbReference>
<dbReference type="Pfam" id="PF08264">
    <property type="entry name" value="Anticodon_1"/>
    <property type="match status" value="1"/>
</dbReference>
<dbReference type="Pfam" id="PF00133">
    <property type="entry name" value="tRNA-synt_1"/>
    <property type="match status" value="1"/>
</dbReference>
<dbReference type="Pfam" id="PF13603">
    <property type="entry name" value="tRNA-synt_1_2"/>
    <property type="match status" value="1"/>
</dbReference>
<dbReference type="Pfam" id="PF09334">
    <property type="entry name" value="tRNA-synt_1g"/>
    <property type="match status" value="1"/>
</dbReference>
<dbReference type="PRINTS" id="PR00985">
    <property type="entry name" value="TRNASYNTHLEU"/>
</dbReference>
<dbReference type="SUPFAM" id="SSF47323">
    <property type="entry name" value="Anticodon-binding domain of a subclass of class I aminoacyl-tRNA synthetases"/>
    <property type="match status" value="1"/>
</dbReference>
<dbReference type="SUPFAM" id="SSF52374">
    <property type="entry name" value="Nucleotidylyl transferase"/>
    <property type="match status" value="1"/>
</dbReference>
<dbReference type="SUPFAM" id="SSF50677">
    <property type="entry name" value="ValRS/IleRS/LeuRS editing domain"/>
    <property type="match status" value="1"/>
</dbReference>
<dbReference type="PROSITE" id="PS00178">
    <property type="entry name" value="AA_TRNA_LIGASE_I"/>
    <property type="match status" value="1"/>
</dbReference>
<proteinExistence type="inferred from homology"/>